<protein>
    <recommendedName>
        <fullName evidence="1">Large ribosomal subunit protein uL13</fullName>
    </recommendedName>
    <alternativeName>
        <fullName evidence="2">50S ribosomal protein L13</fullName>
    </alternativeName>
</protein>
<comment type="function">
    <text evidence="1">This protein is one of the early assembly proteins of the 50S ribosomal subunit, although it is not seen to bind rRNA by itself. It is important during the early stages of 50S assembly.</text>
</comment>
<comment type="subunit">
    <text evidence="1">Part of the 50S ribosomal subunit.</text>
</comment>
<comment type="similarity">
    <text evidence="1">Belongs to the universal ribosomal protein uL13 family.</text>
</comment>
<proteinExistence type="inferred from homology"/>
<keyword id="KW-0687">Ribonucleoprotein</keyword>
<keyword id="KW-0689">Ribosomal protein</keyword>
<name>RL13_HERA2</name>
<dbReference type="EMBL" id="CP000875">
    <property type="protein sequence ID" value="ABX07573.1"/>
    <property type="molecule type" value="Genomic_DNA"/>
</dbReference>
<dbReference type="SMR" id="A9B440"/>
<dbReference type="FunCoup" id="A9B440">
    <property type="interactions" value="533"/>
</dbReference>
<dbReference type="STRING" id="316274.Haur_4943"/>
<dbReference type="KEGG" id="hau:Haur_4943"/>
<dbReference type="eggNOG" id="COG0102">
    <property type="taxonomic scope" value="Bacteria"/>
</dbReference>
<dbReference type="HOGENOM" id="CLU_082184_2_2_0"/>
<dbReference type="InParanoid" id="A9B440"/>
<dbReference type="Proteomes" id="UP000000787">
    <property type="component" value="Chromosome"/>
</dbReference>
<dbReference type="GO" id="GO:0022625">
    <property type="term" value="C:cytosolic large ribosomal subunit"/>
    <property type="evidence" value="ECO:0007669"/>
    <property type="project" value="TreeGrafter"/>
</dbReference>
<dbReference type="GO" id="GO:0003729">
    <property type="term" value="F:mRNA binding"/>
    <property type="evidence" value="ECO:0007669"/>
    <property type="project" value="TreeGrafter"/>
</dbReference>
<dbReference type="GO" id="GO:0003735">
    <property type="term" value="F:structural constituent of ribosome"/>
    <property type="evidence" value="ECO:0007669"/>
    <property type="project" value="InterPro"/>
</dbReference>
<dbReference type="GO" id="GO:0017148">
    <property type="term" value="P:negative regulation of translation"/>
    <property type="evidence" value="ECO:0007669"/>
    <property type="project" value="TreeGrafter"/>
</dbReference>
<dbReference type="GO" id="GO:0006412">
    <property type="term" value="P:translation"/>
    <property type="evidence" value="ECO:0007669"/>
    <property type="project" value="UniProtKB-UniRule"/>
</dbReference>
<dbReference type="CDD" id="cd00392">
    <property type="entry name" value="Ribosomal_L13"/>
    <property type="match status" value="1"/>
</dbReference>
<dbReference type="FunFam" id="3.90.1180.10:FF:000001">
    <property type="entry name" value="50S ribosomal protein L13"/>
    <property type="match status" value="1"/>
</dbReference>
<dbReference type="Gene3D" id="3.90.1180.10">
    <property type="entry name" value="Ribosomal protein L13"/>
    <property type="match status" value="1"/>
</dbReference>
<dbReference type="HAMAP" id="MF_01366">
    <property type="entry name" value="Ribosomal_uL13"/>
    <property type="match status" value="1"/>
</dbReference>
<dbReference type="InterPro" id="IPR005822">
    <property type="entry name" value="Ribosomal_uL13"/>
</dbReference>
<dbReference type="InterPro" id="IPR005823">
    <property type="entry name" value="Ribosomal_uL13_bac-type"/>
</dbReference>
<dbReference type="InterPro" id="IPR023563">
    <property type="entry name" value="Ribosomal_uL13_CS"/>
</dbReference>
<dbReference type="InterPro" id="IPR036899">
    <property type="entry name" value="Ribosomal_uL13_sf"/>
</dbReference>
<dbReference type="NCBIfam" id="TIGR01066">
    <property type="entry name" value="rplM_bact"/>
    <property type="match status" value="1"/>
</dbReference>
<dbReference type="PANTHER" id="PTHR11545:SF2">
    <property type="entry name" value="LARGE RIBOSOMAL SUBUNIT PROTEIN UL13M"/>
    <property type="match status" value="1"/>
</dbReference>
<dbReference type="PANTHER" id="PTHR11545">
    <property type="entry name" value="RIBOSOMAL PROTEIN L13"/>
    <property type="match status" value="1"/>
</dbReference>
<dbReference type="Pfam" id="PF00572">
    <property type="entry name" value="Ribosomal_L13"/>
    <property type="match status" value="1"/>
</dbReference>
<dbReference type="PIRSF" id="PIRSF002181">
    <property type="entry name" value="Ribosomal_L13"/>
    <property type="match status" value="1"/>
</dbReference>
<dbReference type="SUPFAM" id="SSF52161">
    <property type="entry name" value="Ribosomal protein L13"/>
    <property type="match status" value="1"/>
</dbReference>
<dbReference type="PROSITE" id="PS00783">
    <property type="entry name" value="RIBOSOMAL_L13"/>
    <property type="match status" value="1"/>
</dbReference>
<accession>A9B440</accession>
<organism>
    <name type="scientific">Herpetosiphon aurantiacus (strain ATCC 23779 / DSM 785 / 114-95)</name>
    <dbReference type="NCBI Taxonomy" id="316274"/>
    <lineage>
        <taxon>Bacteria</taxon>
        <taxon>Bacillati</taxon>
        <taxon>Chloroflexota</taxon>
        <taxon>Chloroflexia</taxon>
        <taxon>Herpetosiphonales</taxon>
        <taxon>Herpetosiphonaceae</taxon>
        <taxon>Herpetosiphon</taxon>
    </lineage>
</organism>
<feature type="chain" id="PRO_1000144140" description="Large ribosomal subunit protein uL13">
    <location>
        <begin position="1"/>
        <end position="144"/>
    </location>
</feature>
<evidence type="ECO:0000255" key="1">
    <source>
        <dbReference type="HAMAP-Rule" id="MF_01366"/>
    </source>
</evidence>
<evidence type="ECO:0000305" key="2"/>
<reference key="1">
    <citation type="journal article" date="2011" name="Stand. Genomic Sci.">
        <title>Complete genome sequence of the filamentous gliding predatory bacterium Herpetosiphon aurantiacus type strain (114-95(T)).</title>
        <authorList>
            <person name="Kiss H."/>
            <person name="Nett M."/>
            <person name="Domin N."/>
            <person name="Martin K."/>
            <person name="Maresca J.A."/>
            <person name="Copeland A."/>
            <person name="Lapidus A."/>
            <person name="Lucas S."/>
            <person name="Berry K.W."/>
            <person name="Glavina Del Rio T."/>
            <person name="Dalin E."/>
            <person name="Tice H."/>
            <person name="Pitluck S."/>
            <person name="Richardson P."/>
            <person name="Bruce D."/>
            <person name="Goodwin L."/>
            <person name="Han C."/>
            <person name="Detter J.C."/>
            <person name="Schmutz J."/>
            <person name="Brettin T."/>
            <person name="Land M."/>
            <person name="Hauser L."/>
            <person name="Kyrpides N.C."/>
            <person name="Ivanova N."/>
            <person name="Goeker M."/>
            <person name="Woyke T."/>
            <person name="Klenk H.P."/>
            <person name="Bryant D.A."/>
        </authorList>
    </citation>
    <scope>NUCLEOTIDE SEQUENCE [LARGE SCALE GENOMIC DNA]</scope>
    <source>
        <strain>ATCC 23779 / DSM 785 / 114-95</strain>
    </source>
</reference>
<sequence length="144" mass="16380">MKTYSQKASEIQREWLVVDAQNQVLGRLATQIATLIRGKHKPTYTPSMDGGDFVIVVNAEKIRVTGDKANQKIYYRHSNFPGGLKRTAYKVMMQTHPERIIYFAVKGMLPRNRLSRHIIKKLKVYAGESHPHASQSPKVYAVKG</sequence>
<gene>
    <name evidence="1" type="primary">rplM</name>
    <name type="ordered locus">Haur_4943</name>
</gene>